<protein>
    <recommendedName>
        <fullName>Histone H3-like centromeric protein A</fullName>
    </recommendedName>
    <alternativeName>
        <fullName>Centromere protein A</fullName>
        <shortName>CENP-A</shortName>
        <shortName>GgCENP-A</shortName>
    </alternativeName>
</protein>
<feature type="chain" id="PRO_0000249468" description="Histone H3-like centromeric protein A">
    <location>
        <begin position="1"/>
        <end position="131"/>
    </location>
</feature>
<feature type="region of interest" description="Disordered" evidence="2">
    <location>
        <begin position="1"/>
        <end position="33"/>
    </location>
</feature>
<feature type="region of interest" description="H3-like">
    <location>
        <begin position="34"/>
        <end position="131"/>
    </location>
</feature>
<feature type="compositionally biased region" description="Basic residues" evidence="2">
    <location>
        <begin position="1"/>
        <end position="14"/>
    </location>
</feature>
<feature type="compositionally biased region" description="Pro residues" evidence="2">
    <location>
        <begin position="15"/>
        <end position="26"/>
    </location>
</feature>
<feature type="helix" evidence="6">
    <location>
        <begin position="55"/>
        <end position="70"/>
    </location>
</feature>
<feature type="helix" evidence="6">
    <location>
        <begin position="79"/>
        <end position="106"/>
    </location>
</feature>
<feature type="strand" evidence="6">
    <location>
        <begin position="110"/>
        <end position="112"/>
    </location>
</feature>
<feature type="helix" evidence="6">
    <location>
        <begin position="114"/>
        <end position="123"/>
    </location>
</feature>
<feature type="helix" evidence="6">
    <location>
        <begin position="126"/>
        <end position="129"/>
    </location>
</feature>
<evidence type="ECO:0000250" key="1">
    <source>
        <dbReference type="UniProtKB" id="P49450"/>
    </source>
</evidence>
<evidence type="ECO:0000256" key="2">
    <source>
        <dbReference type="SAM" id="MobiDB-lite"/>
    </source>
</evidence>
<evidence type="ECO:0000269" key="3">
    <source>
    </source>
</evidence>
<evidence type="ECO:0000269" key="4">
    <source>
    </source>
</evidence>
<evidence type="ECO:0000305" key="5"/>
<evidence type="ECO:0007829" key="6">
    <source>
        <dbReference type="PDB" id="7Y7I"/>
    </source>
</evidence>
<comment type="function">
    <text evidence="1 3 4">Histone H3-like nucleosomal protein that is specifically found in centromeric nucleosomes (PubMed:14563550). Replaces conventional H3 in the nucleosome core of centromeric chromatin that serves as an assembly site for the inner kinetochore. The presence of CENPA subtly modifies the nucleosome structure and the way DNA is wrapped around the nucleosome and gives rise to protruding DNA ends that are less well-ordered and rigid compared to nucleosomes containing histone H3. May serve as an epigenetic mark that propagates centromere identity through replication and cell division (By similarity). Required for recruitment and assembly of kinetochore proteins, and as a consequence required for progress through mitosis, chromosome segregation and cytokinesis (PubMed:15870271).</text>
</comment>
<comment type="subunit">
    <text evidence="1">Component of centromeric nucleosomes, where DNA is wrapped around a histone octamer core. The octamer contains two molecules each of H2A, H2B, CENPA and H4 assembled in one CENPA-H4 heterotetramer and two H2A-H2B heterodimers. CENPA modulates the DNA-binding characteristics of nucleosomes so that protruding DNA ends have higher flexibility than in nucleosomes containing conventional histone H3.</text>
</comment>
<comment type="subcellular location">
    <subcellularLocation>
        <location evidence="3">Nucleus</location>
    </subcellularLocation>
    <subcellularLocation>
        <location evidence="3">Chromosome</location>
        <location evidence="3">Centromere</location>
    </subcellularLocation>
    <text evidence="1">Localizes exclusively to sites of kinetochore assembly in centromeres. Occupies a compact domain at the inner kinetochore plate stretching across 2 thirds of the length of the constriction but encompassing only one third of the constriction width and height.</text>
</comment>
<comment type="developmental stage">
    <text evidence="3">Present in all interphase cells with a punctate pattern in the nucleus. Aligned along the metaphase plate in metaphase cells and becomes concentrated at the poles in anaphase cells (at protein level).</text>
</comment>
<comment type="similarity">
    <text evidence="5">Belongs to the histone H3 family.</text>
</comment>
<organism>
    <name type="scientific">Gallus gallus</name>
    <name type="common">Chicken</name>
    <dbReference type="NCBI Taxonomy" id="9031"/>
    <lineage>
        <taxon>Eukaryota</taxon>
        <taxon>Metazoa</taxon>
        <taxon>Chordata</taxon>
        <taxon>Craniata</taxon>
        <taxon>Vertebrata</taxon>
        <taxon>Euteleostomi</taxon>
        <taxon>Archelosauria</taxon>
        <taxon>Archosauria</taxon>
        <taxon>Dinosauria</taxon>
        <taxon>Saurischia</taxon>
        <taxon>Theropoda</taxon>
        <taxon>Coelurosauria</taxon>
        <taxon>Aves</taxon>
        <taxon>Neognathae</taxon>
        <taxon>Galloanserae</taxon>
        <taxon>Galliformes</taxon>
        <taxon>Phasianidae</taxon>
        <taxon>Phasianinae</taxon>
        <taxon>Gallus</taxon>
    </lineage>
</organism>
<dbReference type="EMBL" id="AY205311">
    <property type="protein sequence ID" value="AAP40821.1"/>
    <property type="molecule type" value="Genomic_DNA"/>
</dbReference>
<dbReference type="EMBL" id="AY205310">
    <property type="protein sequence ID" value="AAP40821.1"/>
    <property type="status" value="JOINED"/>
    <property type="molecule type" value="Genomic_DNA"/>
</dbReference>
<dbReference type="RefSeq" id="NP_001094507.1">
    <property type="nucleotide sequence ID" value="NM_001101037.3"/>
</dbReference>
<dbReference type="PDB" id="7BXT">
    <property type="method" value="EM"/>
    <property type="resolution" value="4.20 A"/>
    <property type="chains" value="A/E=7-131"/>
</dbReference>
<dbReference type="PDB" id="7BY0">
    <property type="method" value="EM"/>
    <property type="resolution" value="4.50 A"/>
    <property type="chains" value="A/E=7-131"/>
</dbReference>
<dbReference type="PDB" id="7Y7I">
    <property type="method" value="EM"/>
    <property type="resolution" value="3.42 A"/>
    <property type="chains" value="A/E=55-131"/>
</dbReference>
<dbReference type="PDBsum" id="7BXT"/>
<dbReference type="PDBsum" id="7BY0"/>
<dbReference type="PDBsum" id="7Y7I"/>
<dbReference type="EMDB" id="EMD-30237"/>
<dbReference type="EMDB" id="EMD-30239"/>
<dbReference type="EMDB" id="EMD-33666"/>
<dbReference type="SMR" id="Q6XXM1"/>
<dbReference type="BioGRID" id="694899">
    <property type="interactions" value="1"/>
</dbReference>
<dbReference type="FunCoup" id="Q6XXM1">
    <property type="interactions" value="386"/>
</dbReference>
<dbReference type="IntAct" id="Q6XXM1">
    <property type="interactions" value="2"/>
</dbReference>
<dbReference type="STRING" id="9031.ENSGALP00000044134"/>
<dbReference type="PaxDb" id="9031-ENSGALP00000042200"/>
<dbReference type="Ensembl" id="ENSGALT00010007407.1">
    <property type="protein sequence ID" value="ENSGALP00010004431.1"/>
    <property type="gene ID" value="ENSGALG00010003178.1"/>
</dbReference>
<dbReference type="GeneID" id="100113359"/>
<dbReference type="KEGG" id="gga:100113359"/>
<dbReference type="CTD" id="1058"/>
<dbReference type="VEuPathDB" id="HostDB:geneid_100113359"/>
<dbReference type="eggNOG" id="KOG1745">
    <property type="taxonomic scope" value="Eukaryota"/>
</dbReference>
<dbReference type="GeneTree" id="ENSGT01130000278322"/>
<dbReference type="HOGENOM" id="CLU_078295_3_2_1"/>
<dbReference type="InParanoid" id="Q6XXM1"/>
<dbReference type="OMA" id="MRWQVYA"/>
<dbReference type="OrthoDB" id="842664at2759"/>
<dbReference type="PhylomeDB" id="Q6XXM1"/>
<dbReference type="PRO" id="PR:Q6XXM1"/>
<dbReference type="Proteomes" id="UP000000539">
    <property type="component" value="Chromosome 16"/>
</dbReference>
<dbReference type="Bgee" id="ENSGALG00000037735">
    <property type="expression patterns" value="Expressed in testis and 12 other cell types or tissues"/>
</dbReference>
<dbReference type="GO" id="GO:0043505">
    <property type="term" value="C:CENP-A containing nucleosome"/>
    <property type="evidence" value="ECO:0007669"/>
    <property type="project" value="Ensembl"/>
</dbReference>
<dbReference type="GO" id="GO:0000779">
    <property type="term" value="C:condensed chromosome, centromeric region"/>
    <property type="evidence" value="ECO:0007669"/>
    <property type="project" value="Ensembl"/>
</dbReference>
<dbReference type="GO" id="GO:0005654">
    <property type="term" value="C:nucleoplasm"/>
    <property type="evidence" value="ECO:0007669"/>
    <property type="project" value="Ensembl"/>
</dbReference>
<dbReference type="GO" id="GO:0003677">
    <property type="term" value="F:DNA binding"/>
    <property type="evidence" value="ECO:0007669"/>
    <property type="project" value="UniProtKB-KW"/>
</dbReference>
<dbReference type="GO" id="GO:0046982">
    <property type="term" value="F:protein heterodimerization activity"/>
    <property type="evidence" value="ECO:0007669"/>
    <property type="project" value="InterPro"/>
</dbReference>
<dbReference type="GO" id="GO:0030527">
    <property type="term" value="F:structural constituent of chromatin"/>
    <property type="evidence" value="ECO:0007669"/>
    <property type="project" value="InterPro"/>
</dbReference>
<dbReference type="GO" id="GO:0034080">
    <property type="term" value="P:CENP-A containing chromatin assembly"/>
    <property type="evidence" value="ECO:0007669"/>
    <property type="project" value="Ensembl"/>
</dbReference>
<dbReference type="GO" id="GO:0000132">
    <property type="term" value="P:establishment of mitotic spindle orientation"/>
    <property type="evidence" value="ECO:0007669"/>
    <property type="project" value="Ensembl"/>
</dbReference>
<dbReference type="GO" id="GO:0051382">
    <property type="term" value="P:kinetochore assembly"/>
    <property type="evidence" value="ECO:0007669"/>
    <property type="project" value="Ensembl"/>
</dbReference>
<dbReference type="GO" id="GO:0000281">
    <property type="term" value="P:mitotic cytokinesis"/>
    <property type="evidence" value="ECO:0007669"/>
    <property type="project" value="Ensembl"/>
</dbReference>
<dbReference type="GO" id="GO:0071459">
    <property type="term" value="P:protein localization to chromosome, centromeric region"/>
    <property type="evidence" value="ECO:0007669"/>
    <property type="project" value="Ensembl"/>
</dbReference>
<dbReference type="CDD" id="cd22911">
    <property type="entry name" value="HFD_H3"/>
    <property type="match status" value="1"/>
</dbReference>
<dbReference type="FunFam" id="1.10.20.10:FF:000085">
    <property type="entry name" value="Histone H3.2"/>
    <property type="match status" value="1"/>
</dbReference>
<dbReference type="Gene3D" id="1.10.20.10">
    <property type="entry name" value="Histone, subunit A"/>
    <property type="match status" value="1"/>
</dbReference>
<dbReference type="InterPro" id="IPR009072">
    <property type="entry name" value="Histone-fold"/>
</dbReference>
<dbReference type="InterPro" id="IPR007125">
    <property type="entry name" value="Histone_H2A/H2B/H3"/>
</dbReference>
<dbReference type="InterPro" id="IPR000164">
    <property type="entry name" value="Histone_H3/CENP-A"/>
</dbReference>
<dbReference type="PANTHER" id="PTHR45810:SF1">
    <property type="entry name" value="HISTONE H3-LIKE CENTROMERIC PROTEIN A"/>
    <property type="match status" value="1"/>
</dbReference>
<dbReference type="PANTHER" id="PTHR45810">
    <property type="entry name" value="HISTONE H3.2"/>
    <property type="match status" value="1"/>
</dbReference>
<dbReference type="Pfam" id="PF00125">
    <property type="entry name" value="Histone"/>
    <property type="match status" value="1"/>
</dbReference>
<dbReference type="PRINTS" id="PR00622">
    <property type="entry name" value="HISTONEH3"/>
</dbReference>
<dbReference type="SMART" id="SM00428">
    <property type="entry name" value="H3"/>
    <property type="match status" value="1"/>
</dbReference>
<dbReference type="SUPFAM" id="SSF47113">
    <property type="entry name" value="Histone-fold"/>
    <property type="match status" value="1"/>
</dbReference>
<keyword id="KW-0002">3D-structure</keyword>
<keyword id="KW-0137">Centromere</keyword>
<keyword id="KW-0158">Chromosome</keyword>
<keyword id="KW-0238">DNA-binding</keyword>
<keyword id="KW-0544">Nucleosome core</keyword>
<keyword id="KW-0539">Nucleus</keyword>
<keyword id="KW-1185">Reference proteome</keyword>
<reference key="1">
    <citation type="journal article" date="2003" name="Gene">
        <title>Characterization of chicken CENP-A and comparative sequence analysis of vertebrate centromere-specific histone H3-like proteins.</title>
        <authorList>
            <person name="Regnier V."/>
            <person name="Novelli J."/>
            <person name="Fukagawa T."/>
            <person name="Vagnarelli P."/>
            <person name="Brown W."/>
        </authorList>
    </citation>
    <scope>NUCLEOTIDE SEQUENCE [GENOMIC DNA]</scope>
    <scope>FUNCTION</scope>
    <scope>SUBCELLULAR LOCATION</scope>
    <scope>DEVELOPMENTAL STAGE</scope>
</reference>
<reference key="2">
    <citation type="journal article" date="2005" name="Mol. Cell. Biol.">
        <title>CENP-A is required for accurate chromosome segregation and sustained kinetochore association of BubR1.</title>
        <authorList>
            <person name="Regnier V."/>
            <person name="Vagnarelli P."/>
            <person name="Fukagawa T."/>
            <person name="Zerjal T."/>
            <person name="Burns E."/>
            <person name="Trouche D."/>
            <person name="Earnshaw W."/>
            <person name="Brown W."/>
        </authorList>
    </citation>
    <scope>FUNCTION</scope>
</reference>
<accession>Q6XXM1</accession>
<gene>
    <name type="primary">CENPA</name>
</gene>
<sequence length="131" mass="15243">MPRPKPRSPRRRGRPPPAAPPPPPARPRARRYRPGQRALREIRRYQSSTALLLRRQPFARVVREICLLFTRGVDYRWQAMALLALQEAAEAFLVHLLEDAYLCSLHARRVTLYPKDLQLARRLRGLQGEGF</sequence>
<name>CENPA_CHICK</name>
<proteinExistence type="evidence at protein level"/>